<sequence length="419" mass="48049">MNKHQKPVLTGQRFKTRKRDEKEKFEPTVFRDTLVQGLNEAGDDLEAVAKFLDSTGSRLDYRRYADTLFDILVAGSMLAPGGTRIDDGDKTKMTNHCVFSANEDHETIRNYAQVFNKLIRRYKYLEKAFEDEMKKLLLFLKAFSEAEQTKLAMLSGILLGNGTLPATILTSLFTDSLVKEGIAASFAVKLFKAWMAEKDANSVTSSLRKANLDKRLLELFPVNRQSVDHFAKYFTDAGLKELSDFLRVQQSLGTRKELQKELQERLSQECPIKEVVLYVKEEMKRNDLPETAVIGLLWTCVMNAVEWNKKEELVAEQALKHLKQYAPLLAVFSSQGQSELVLLQKVQEYCYDNIHFMKAFQKIVVLFYKADVLSEEAILKWYKEAHAAKGKSVFLDQMKKFVEWLQNAEEESESEGEES</sequence>
<accession>Q9WTT7</accession>
<dbReference type="EMBL" id="AF031483">
    <property type="protein sequence ID" value="AAD20436.1"/>
    <property type="molecule type" value="mRNA"/>
</dbReference>
<dbReference type="EMBL" id="BC063149">
    <property type="protein sequence ID" value="AAH63149.1"/>
    <property type="molecule type" value="mRNA"/>
</dbReference>
<dbReference type="RefSeq" id="NP_599229.1">
    <property type="nucleotide sequence ID" value="NM_134402.3"/>
</dbReference>
<dbReference type="SMR" id="Q9WTT7"/>
<dbReference type="FunCoup" id="Q9WTT7">
    <property type="interactions" value="2972"/>
</dbReference>
<dbReference type="STRING" id="10116.ENSRNOP00000007414"/>
<dbReference type="iPTMnet" id="Q9WTT7"/>
<dbReference type="PhosphoSitePlus" id="Q9WTT7"/>
<dbReference type="jPOST" id="Q9WTT7"/>
<dbReference type="PaxDb" id="10116-ENSRNOP00000007414"/>
<dbReference type="Ensembl" id="ENSRNOT00000007414.4">
    <property type="protein sequence ID" value="ENSRNOP00000007414.2"/>
    <property type="gene ID" value="ENSRNOG00000005096.6"/>
</dbReference>
<dbReference type="GeneID" id="171439"/>
<dbReference type="KEGG" id="rno:171439"/>
<dbReference type="UCSC" id="RGD:621507">
    <property type="organism name" value="rat"/>
</dbReference>
<dbReference type="AGR" id="RGD:621507"/>
<dbReference type="CTD" id="28969"/>
<dbReference type="RGD" id="621507">
    <property type="gene designation" value="Bzw2"/>
</dbReference>
<dbReference type="eggNOG" id="KOG2297">
    <property type="taxonomic scope" value="Eukaryota"/>
</dbReference>
<dbReference type="GeneTree" id="ENSGT00390000012561"/>
<dbReference type="HOGENOM" id="CLU_032849_0_1_1"/>
<dbReference type="InParanoid" id="Q9WTT7"/>
<dbReference type="OMA" id="ELIQCIW"/>
<dbReference type="OrthoDB" id="23597at9989"/>
<dbReference type="PhylomeDB" id="Q9WTT7"/>
<dbReference type="TreeFam" id="TF324313"/>
<dbReference type="PRO" id="PR:Q9WTT7"/>
<dbReference type="Proteomes" id="UP000002494">
    <property type="component" value="Chromosome 6"/>
</dbReference>
<dbReference type="Bgee" id="ENSRNOG00000005096">
    <property type="expression patterns" value="Expressed in heart and 20 other cell types or tissues"/>
</dbReference>
<dbReference type="GO" id="GO:0005737">
    <property type="term" value="C:cytoplasm"/>
    <property type="evidence" value="ECO:0000250"/>
    <property type="project" value="UniProtKB"/>
</dbReference>
<dbReference type="GO" id="GO:0006446">
    <property type="term" value="P:regulation of translational initiation"/>
    <property type="evidence" value="ECO:0000250"/>
    <property type="project" value="UniProtKB"/>
</dbReference>
<dbReference type="CDD" id="cd11560">
    <property type="entry name" value="W2_eIF5C_like"/>
    <property type="match status" value="1"/>
</dbReference>
<dbReference type="FunFam" id="1.25.40.180:FF:000006">
    <property type="entry name" value="Basic leucine zipper and W2 domain-containing protein 1"/>
    <property type="match status" value="1"/>
</dbReference>
<dbReference type="Gene3D" id="1.25.40.180">
    <property type="match status" value="1"/>
</dbReference>
<dbReference type="InterPro" id="IPR016024">
    <property type="entry name" value="ARM-type_fold"/>
</dbReference>
<dbReference type="InterPro" id="IPR051245">
    <property type="entry name" value="eIF5-mimic_regulator"/>
</dbReference>
<dbReference type="InterPro" id="IPR043510">
    <property type="entry name" value="W2_BZW1/2"/>
</dbReference>
<dbReference type="InterPro" id="IPR003307">
    <property type="entry name" value="W2_domain"/>
</dbReference>
<dbReference type="PANTHER" id="PTHR14208">
    <property type="entry name" value="BASIC LEUCINE ZIPPER AND W2 DOMAIN-CONTAINING PROTEIN"/>
    <property type="match status" value="1"/>
</dbReference>
<dbReference type="PANTHER" id="PTHR14208:SF7">
    <property type="entry name" value="EIF5-MIMIC PROTEIN 1"/>
    <property type="match status" value="1"/>
</dbReference>
<dbReference type="Pfam" id="PF25504">
    <property type="entry name" value="HEAT_5MP1_2"/>
    <property type="match status" value="1"/>
</dbReference>
<dbReference type="Pfam" id="PF02020">
    <property type="entry name" value="W2"/>
    <property type="match status" value="1"/>
</dbReference>
<dbReference type="SMART" id="SM00515">
    <property type="entry name" value="eIF5C"/>
    <property type="match status" value="1"/>
</dbReference>
<dbReference type="SUPFAM" id="SSF48371">
    <property type="entry name" value="ARM repeat"/>
    <property type="match status" value="1"/>
</dbReference>
<dbReference type="PROSITE" id="PS51363">
    <property type="entry name" value="W2"/>
    <property type="match status" value="1"/>
</dbReference>
<keyword id="KW-0007">Acetylation</keyword>
<keyword id="KW-0963">Cytoplasm</keyword>
<keyword id="KW-0597">Phosphoprotein</keyword>
<keyword id="KW-1185">Reference proteome</keyword>
<keyword id="KW-0810">Translation regulation</keyword>
<protein>
    <recommendedName>
        <fullName evidence="1">eIF5-mimic protein 1</fullName>
    </recommendedName>
    <alternativeName>
        <fullName>Basic leucine zipper and W2 domain-containing protein 2</fullName>
    </alternativeName>
    <alternativeName>
        <fullName>Brain development-related molecule 2</fullName>
    </alternativeName>
</protein>
<evidence type="ECO:0000250" key="1">
    <source>
        <dbReference type="UniProtKB" id="Q9Y6E2"/>
    </source>
</evidence>
<evidence type="ECO:0000255" key="2">
    <source>
        <dbReference type="PROSITE-ProRule" id="PRU00695"/>
    </source>
</evidence>
<evidence type="ECO:0000256" key="3">
    <source>
        <dbReference type="SAM" id="MobiDB-lite"/>
    </source>
</evidence>
<evidence type="ECO:0000269" key="4">
    <source>
    </source>
</evidence>
<evidence type="ECO:0000305" key="5"/>
<evidence type="ECO:0007744" key="6">
    <source>
    </source>
</evidence>
<reference key="1">
    <citation type="journal article" date="2000" name="Brain Res. Dev. Brain Res.">
        <title>Identification of the novel developmentally regulated gene, Bdm2, which is highly expressed in fetal rat brain.</title>
        <authorList>
            <person name="Nishinaka N."/>
            <person name="Hongo S."/>
            <person name="Zhou C.J."/>
            <person name="Shioda S."/>
            <person name="Takahashi R."/>
            <person name="Yamauchi Y."/>
            <person name="Ohashi T."/>
            <person name="Ohki T."/>
            <person name="Nakada N."/>
            <person name="Takeda F."/>
            <person name="Takeda M."/>
        </authorList>
    </citation>
    <scope>NUCLEOTIDE SEQUENCE [MRNA]</scope>
    <scope>TISSUE SPECIFICITY</scope>
    <scope>DEVELOPMENTAL STAGE</scope>
    <source>
        <strain>Wistar</strain>
        <tissue>Fetal brain</tissue>
    </source>
</reference>
<reference key="2">
    <citation type="journal article" date="2004" name="Genome Res.">
        <title>The status, quality, and expansion of the NIH full-length cDNA project: the Mammalian Gene Collection (MGC).</title>
        <authorList>
            <consortium name="The MGC Project Team"/>
        </authorList>
    </citation>
    <scope>NUCLEOTIDE SEQUENCE [LARGE SCALE MRNA]</scope>
    <source>
        <tissue>Pituitary</tissue>
    </source>
</reference>
<reference key="3">
    <citation type="journal article" date="2012" name="Nat. Commun.">
        <title>Quantitative maps of protein phosphorylation sites across 14 different rat organs and tissues.</title>
        <authorList>
            <person name="Lundby A."/>
            <person name="Secher A."/>
            <person name="Lage K."/>
            <person name="Nordsborg N.B."/>
            <person name="Dmytriyev A."/>
            <person name="Lundby C."/>
            <person name="Olsen J.V."/>
        </authorList>
    </citation>
    <scope>PHOSPHORYLATION [LARGE SCALE ANALYSIS] AT SER-412; SER-414 AND SER-419</scope>
    <scope>IDENTIFICATION BY MASS SPECTROMETRY [LARGE SCALE ANALYSIS]</scope>
</reference>
<organism>
    <name type="scientific">Rattus norvegicus</name>
    <name type="common">Rat</name>
    <dbReference type="NCBI Taxonomy" id="10116"/>
    <lineage>
        <taxon>Eukaryota</taxon>
        <taxon>Metazoa</taxon>
        <taxon>Chordata</taxon>
        <taxon>Craniata</taxon>
        <taxon>Vertebrata</taxon>
        <taxon>Euteleostomi</taxon>
        <taxon>Mammalia</taxon>
        <taxon>Eutheria</taxon>
        <taxon>Euarchontoglires</taxon>
        <taxon>Glires</taxon>
        <taxon>Rodentia</taxon>
        <taxon>Myomorpha</taxon>
        <taxon>Muroidea</taxon>
        <taxon>Muridae</taxon>
        <taxon>Murinae</taxon>
        <taxon>Rattus</taxon>
    </lineage>
</organism>
<comment type="function">
    <text evidence="1">Translation initiation regulator which represses non-AUG initiated translation and repeat-associated non-AUG (RAN) initiated translation by acting as a competitive inhibitor of eukaryotic translation initiation factor 5 (EIF5) function (By similarity). Increases the accuracy of translation initiation by impeding EIF5-dependent translation from non-AUG codons by competing with it for interaction with EIF2S2 within the 43S pre-initiation complex (PIC) in an EIF3C-binding dependent manner (By similarity).</text>
</comment>
<comment type="subunit">
    <text evidence="1">Interacts with EIF3E, EIF2S2 and EIF3C.</text>
</comment>
<comment type="subcellular location">
    <subcellularLocation>
        <location evidence="1">Cytoplasm</location>
    </subcellularLocation>
</comment>
<comment type="tissue specificity">
    <text evidence="4">Expressed at high levels in heart, and at lower levels in skeletal muscle, spleen and lung. Expressed at low levels in brain regions where nascent and immature neurons are present.</text>
</comment>
<comment type="developmental stage">
    <text evidence="4">Expressed at 8 dpc. In brain, expression increases between 14 dpc and 16 dpc, reaches a plateau at 18 dpc, and subsequently decreases.</text>
</comment>
<comment type="similarity">
    <text evidence="5">Belongs to the BZW family.</text>
</comment>
<feature type="chain" id="PRO_0000254622" description="eIF5-mimic protein 1">
    <location>
        <begin position="1"/>
        <end position="419"/>
    </location>
</feature>
<feature type="domain" description="W2" evidence="2">
    <location>
        <begin position="248"/>
        <end position="415"/>
    </location>
</feature>
<feature type="region of interest" description="Disordered" evidence="3">
    <location>
        <begin position="1"/>
        <end position="22"/>
    </location>
</feature>
<feature type="modified residue" description="N6-acetyllysine" evidence="1">
    <location>
        <position position="117"/>
    </location>
</feature>
<feature type="modified residue" description="Phosphoserine" evidence="6">
    <location>
        <position position="412"/>
    </location>
</feature>
<feature type="modified residue" description="Phosphoserine" evidence="6">
    <location>
        <position position="414"/>
    </location>
</feature>
<feature type="modified residue" description="Phosphoserine" evidence="6">
    <location>
        <position position="419"/>
    </location>
</feature>
<proteinExistence type="evidence at protein level"/>
<name>5MP1_RAT</name>
<gene>
    <name type="primary">Bzw2</name>
    <name evidence="1" type="synonym">5mp1</name>
    <name type="synonym">Bdm2</name>
    <name type="synonym">Hfb2</name>
</gene>